<proteinExistence type="inferred from homology"/>
<feature type="chain" id="PRO_1000134897" description="Phosphoribosylformylglycinamidine synthase subunit PurL">
    <location>
        <begin position="1"/>
        <end position="725"/>
    </location>
</feature>
<feature type="active site" evidence="1">
    <location>
        <position position="42"/>
    </location>
</feature>
<feature type="active site" description="Proton acceptor" evidence="1">
    <location>
        <position position="88"/>
    </location>
</feature>
<feature type="binding site" evidence="1">
    <location>
        <position position="45"/>
    </location>
    <ligand>
        <name>ATP</name>
        <dbReference type="ChEBI" id="CHEBI:30616"/>
    </ligand>
</feature>
<feature type="binding site" evidence="1">
    <location>
        <position position="84"/>
    </location>
    <ligand>
        <name>ATP</name>
        <dbReference type="ChEBI" id="CHEBI:30616"/>
    </ligand>
</feature>
<feature type="binding site" evidence="1">
    <location>
        <position position="86"/>
    </location>
    <ligand>
        <name>Mg(2+)</name>
        <dbReference type="ChEBI" id="CHEBI:18420"/>
        <label>1</label>
    </ligand>
</feature>
<feature type="binding site" evidence="1">
    <location>
        <begin position="87"/>
        <end position="90"/>
    </location>
    <ligand>
        <name>substrate</name>
    </ligand>
</feature>
<feature type="binding site" evidence="1">
    <location>
        <position position="109"/>
    </location>
    <ligand>
        <name>substrate</name>
    </ligand>
</feature>
<feature type="binding site" evidence="1">
    <location>
        <position position="110"/>
    </location>
    <ligand>
        <name>Mg(2+)</name>
        <dbReference type="ChEBI" id="CHEBI:18420"/>
        <label>2</label>
    </ligand>
</feature>
<feature type="binding site" evidence="1">
    <location>
        <position position="237"/>
    </location>
    <ligand>
        <name>substrate</name>
    </ligand>
</feature>
<feature type="binding site" evidence="1">
    <location>
        <position position="265"/>
    </location>
    <ligand>
        <name>Mg(2+)</name>
        <dbReference type="ChEBI" id="CHEBI:18420"/>
        <label>2</label>
    </ligand>
</feature>
<feature type="binding site" evidence="1">
    <location>
        <begin position="309"/>
        <end position="311"/>
    </location>
    <ligand>
        <name>substrate</name>
    </ligand>
</feature>
<feature type="binding site" evidence="1">
    <location>
        <position position="491"/>
    </location>
    <ligand>
        <name>ATP</name>
        <dbReference type="ChEBI" id="CHEBI:30616"/>
    </ligand>
</feature>
<feature type="binding site" evidence="1">
    <location>
        <position position="528"/>
    </location>
    <ligand>
        <name>ATP</name>
        <dbReference type="ChEBI" id="CHEBI:30616"/>
    </ligand>
</feature>
<feature type="binding site" evidence="1">
    <location>
        <position position="529"/>
    </location>
    <ligand>
        <name>Mg(2+)</name>
        <dbReference type="ChEBI" id="CHEBI:18420"/>
        <label>1</label>
    </ligand>
</feature>
<feature type="binding site" evidence="1">
    <location>
        <position position="531"/>
    </location>
    <ligand>
        <name>substrate</name>
    </ligand>
</feature>
<name>PURL_CAMLR</name>
<comment type="function">
    <text evidence="1">Part of the phosphoribosylformylglycinamidine synthase complex involved in the purines biosynthetic pathway. Catalyzes the ATP-dependent conversion of formylglycinamide ribonucleotide (FGAR) and glutamine to yield formylglycinamidine ribonucleotide (FGAM) and glutamate. The FGAM synthase complex is composed of three subunits. PurQ produces an ammonia molecule by converting glutamine to glutamate. PurL transfers the ammonia molecule to FGAR to form FGAM in an ATP-dependent manner. PurS interacts with PurQ and PurL and is thought to assist in the transfer of the ammonia molecule from PurQ to PurL.</text>
</comment>
<comment type="catalytic activity">
    <reaction evidence="1">
        <text>N(2)-formyl-N(1)-(5-phospho-beta-D-ribosyl)glycinamide + L-glutamine + ATP + H2O = 2-formamido-N(1)-(5-O-phospho-beta-D-ribosyl)acetamidine + L-glutamate + ADP + phosphate + H(+)</text>
        <dbReference type="Rhea" id="RHEA:17129"/>
        <dbReference type="ChEBI" id="CHEBI:15377"/>
        <dbReference type="ChEBI" id="CHEBI:15378"/>
        <dbReference type="ChEBI" id="CHEBI:29985"/>
        <dbReference type="ChEBI" id="CHEBI:30616"/>
        <dbReference type="ChEBI" id="CHEBI:43474"/>
        <dbReference type="ChEBI" id="CHEBI:58359"/>
        <dbReference type="ChEBI" id="CHEBI:147286"/>
        <dbReference type="ChEBI" id="CHEBI:147287"/>
        <dbReference type="ChEBI" id="CHEBI:456216"/>
        <dbReference type="EC" id="6.3.5.3"/>
    </reaction>
</comment>
<comment type="pathway">
    <text evidence="1">Purine metabolism; IMP biosynthesis via de novo pathway; 5-amino-1-(5-phospho-D-ribosyl)imidazole from N(2)-formyl-N(1)-(5-phospho-D-ribosyl)glycinamide: step 1/2.</text>
</comment>
<comment type="subunit">
    <text evidence="1">Monomer. Part of the FGAM synthase complex composed of 1 PurL, 1 PurQ and 2 PurS subunits.</text>
</comment>
<comment type="subcellular location">
    <subcellularLocation>
        <location evidence="1">Cytoplasm</location>
    </subcellularLocation>
</comment>
<comment type="similarity">
    <text evidence="1">Belongs to the FGAMS family.</text>
</comment>
<dbReference type="EC" id="6.3.5.3" evidence="1"/>
<dbReference type="EMBL" id="CP000932">
    <property type="protein sequence ID" value="ACM63881.1"/>
    <property type="molecule type" value="Genomic_DNA"/>
</dbReference>
<dbReference type="RefSeq" id="WP_012661264.1">
    <property type="nucleotide sequence ID" value="NC_012039.1"/>
</dbReference>
<dbReference type="SMR" id="B9KFP6"/>
<dbReference type="STRING" id="306263.Cla_0547"/>
<dbReference type="KEGG" id="cla:CLA_0547"/>
<dbReference type="PATRIC" id="fig|306263.5.peg.530"/>
<dbReference type="eggNOG" id="COG0046">
    <property type="taxonomic scope" value="Bacteria"/>
</dbReference>
<dbReference type="HOGENOM" id="CLU_003100_0_1_7"/>
<dbReference type="UniPathway" id="UPA00074">
    <property type="reaction ID" value="UER00128"/>
</dbReference>
<dbReference type="Proteomes" id="UP000007727">
    <property type="component" value="Chromosome"/>
</dbReference>
<dbReference type="GO" id="GO:0005737">
    <property type="term" value="C:cytoplasm"/>
    <property type="evidence" value="ECO:0007669"/>
    <property type="project" value="UniProtKB-SubCell"/>
</dbReference>
<dbReference type="GO" id="GO:0005524">
    <property type="term" value="F:ATP binding"/>
    <property type="evidence" value="ECO:0007669"/>
    <property type="project" value="UniProtKB-UniRule"/>
</dbReference>
<dbReference type="GO" id="GO:0000287">
    <property type="term" value="F:magnesium ion binding"/>
    <property type="evidence" value="ECO:0007669"/>
    <property type="project" value="UniProtKB-UniRule"/>
</dbReference>
<dbReference type="GO" id="GO:0004642">
    <property type="term" value="F:phosphoribosylformylglycinamidine synthase activity"/>
    <property type="evidence" value="ECO:0007669"/>
    <property type="project" value="UniProtKB-UniRule"/>
</dbReference>
<dbReference type="GO" id="GO:0006189">
    <property type="term" value="P:'de novo' IMP biosynthetic process"/>
    <property type="evidence" value="ECO:0007669"/>
    <property type="project" value="UniProtKB-UniRule"/>
</dbReference>
<dbReference type="CDD" id="cd02203">
    <property type="entry name" value="PurL_repeat1"/>
    <property type="match status" value="1"/>
</dbReference>
<dbReference type="CDD" id="cd02204">
    <property type="entry name" value="PurL_repeat2"/>
    <property type="match status" value="1"/>
</dbReference>
<dbReference type="FunFam" id="3.30.1330.10:FF:000004">
    <property type="entry name" value="Phosphoribosylformylglycinamidine synthase subunit PurL"/>
    <property type="match status" value="1"/>
</dbReference>
<dbReference type="Gene3D" id="3.90.650.10">
    <property type="entry name" value="PurM-like C-terminal domain"/>
    <property type="match status" value="2"/>
</dbReference>
<dbReference type="Gene3D" id="3.30.1330.10">
    <property type="entry name" value="PurM-like, N-terminal domain"/>
    <property type="match status" value="2"/>
</dbReference>
<dbReference type="HAMAP" id="MF_00420">
    <property type="entry name" value="PurL_2"/>
    <property type="match status" value="1"/>
</dbReference>
<dbReference type="InterPro" id="IPR010074">
    <property type="entry name" value="PRibForGlyAmidine_synth_PurL"/>
</dbReference>
<dbReference type="InterPro" id="IPR041609">
    <property type="entry name" value="PurL_linker"/>
</dbReference>
<dbReference type="InterPro" id="IPR010918">
    <property type="entry name" value="PurM-like_C_dom"/>
</dbReference>
<dbReference type="InterPro" id="IPR036676">
    <property type="entry name" value="PurM-like_C_sf"/>
</dbReference>
<dbReference type="InterPro" id="IPR016188">
    <property type="entry name" value="PurM-like_N"/>
</dbReference>
<dbReference type="InterPro" id="IPR036921">
    <property type="entry name" value="PurM-like_N_sf"/>
</dbReference>
<dbReference type="NCBIfam" id="TIGR01736">
    <property type="entry name" value="FGAM_synth_II"/>
    <property type="match status" value="1"/>
</dbReference>
<dbReference type="NCBIfam" id="NF002290">
    <property type="entry name" value="PRK01213.1"/>
    <property type="match status" value="1"/>
</dbReference>
<dbReference type="PANTHER" id="PTHR43555">
    <property type="entry name" value="PHOSPHORIBOSYLFORMYLGLYCINAMIDINE SYNTHASE SUBUNIT PURL"/>
    <property type="match status" value="1"/>
</dbReference>
<dbReference type="PANTHER" id="PTHR43555:SF1">
    <property type="entry name" value="PHOSPHORIBOSYLFORMYLGLYCINAMIDINE SYNTHASE SUBUNIT PURL"/>
    <property type="match status" value="1"/>
</dbReference>
<dbReference type="Pfam" id="PF00586">
    <property type="entry name" value="AIRS"/>
    <property type="match status" value="2"/>
</dbReference>
<dbReference type="Pfam" id="PF02769">
    <property type="entry name" value="AIRS_C"/>
    <property type="match status" value="2"/>
</dbReference>
<dbReference type="Pfam" id="PF18072">
    <property type="entry name" value="FGAR-AT_linker"/>
    <property type="match status" value="1"/>
</dbReference>
<dbReference type="PIRSF" id="PIRSF001587">
    <property type="entry name" value="FGAM_synthase_II"/>
    <property type="match status" value="1"/>
</dbReference>
<dbReference type="SUPFAM" id="SSF56042">
    <property type="entry name" value="PurM C-terminal domain-like"/>
    <property type="match status" value="2"/>
</dbReference>
<dbReference type="SUPFAM" id="SSF55326">
    <property type="entry name" value="PurM N-terminal domain-like"/>
    <property type="match status" value="2"/>
</dbReference>
<gene>
    <name evidence="1" type="primary">purL</name>
    <name type="ordered locus">Cla_0547</name>
</gene>
<organism>
    <name type="scientific">Campylobacter lari (strain RM2100 / D67 / ATCC BAA-1060)</name>
    <dbReference type="NCBI Taxonomy" id="306263"/>
    <lineage>
        <taxon>Bacteria</taxon>
        <taxon>Pseudomonadati</taxon>
        <taxon>Campylobacterota</taxon>
        <taxon>Epsilonproteobacteria</taxon>
        <taxon>Campylobacterales</taxon>
        <taxon>Campylobacteraceae</taxon>
        <taxon>Campylobacter</taxon>
    </lineage>
</organism>
<keyword id="KW-0067">ATP-binding</keyword>
<keyword id="KW-0963">Cytoplasm</keyword>
<keyword id="KW-0436">Ligase</keyword>
<keyword id="KW-0460">Magnesium</keyword>
<keyword id="KW-0479">Metal-binding</keyword>
<keyword id="KW-0547">Nucleotide-binding</keyword>
<keyword id="KW-0658">Purine biosynthesis</keyword>
<keyword id="KW-1185">Reference proteome</keyword>
<sequence length="725" mass="78991">MDKEIIKQHKISDEEYQEILNILGREPNLLELGVISAMWSEHCSYKSSKKYLSGFPTKAPWVIQGPGENAGVIDIGKKMAAVFKVESHNHPSFIEPFAGAATGVGGILRDVFTMGARVVAGMNSLKFGNIHDEKIGKHQKYLVKGVVSGISHYGNCMGVPTIGGECAFDECFNGNILVNAFALGTCKIKDIFYAKAEGIGNPVIYVGSKTGRDGLGGAVMASDSFNESSKSLRPTVQIGDPFAEKLLMEACLELFKTDYIVGIQDMGAAGLTSSSFEMAGRSGSGMRLYLDKTPMREEGMTPYELMLSESQERMLICAKKGYEEKVIEIFNKWGLDAAIIGEVTDSGKMELFWHGELVGLIPIEPLSEKAPILDRPVARPKYLDEIKNYKFNLNISTQEAFEKLLANENVSNKAYIYEQFDSSVQTNTLKSDGALGANSIRIKENNCLLSMAIECNSRLNYVNPKIGAAAAVASVGRKIACSGAKPLAISDCLNYGNPQNPEVMWQFAQGCEGIKLACKELNTPVVSGNVSLYNETDGVSIFPSPTIACVGVNEKAENVLKSYFSKDTSAIYLLGESKGSFGGSLIAKILDKKVAGELEDIDFSAELKLWDFLLKANEAKILDCANSIGIGGIAITLAKMCAMANLGINAKTNFADKSFIFEESPTRVIVGVKDEEEFIKFVNEMGINFAKLGNLDEKDFILDDIKISLAKLQTIYFDKFNEYLG</sequence>
<accession>B9KFP6</accession>
<protein>
    <recommendedName>
        <fullName evidence="1">Phosphoribosylformylglycinamidine synthase subunit PurL</fullName>
        <shortName evidence="1">FGAM synthase</shortName>
        <ecNumber evidence="1">6.3.5.3</ecNumber>
    </recommendedName>
    <alternativeName>
        <fullName evidence="1">Formylglycinamide ribonucleotide amidotransferase subunit II</fullName>
        <shortName evidence="1">FGAR amidotransferase II</shortName>
        <shortName evidence="1">FGAR-AT II</shortName>
    </alternativeName>
    <alternativeName>
        <fullName evidence="1">Glutamine amidotransferase PurL</fullName>
    </alternativeName>
    <alternativeName>
        <fullName evidence="1">Phosphoribosylformylglycinamidine synthase subunit II</fullName>
    </alternativeName>
</protein>
<evidence type="ECO:0000255" key="1">
    <source>
        <dbReference type="HAMAP-Rule" id="MF_00420"/>
    </source>
</evidence>
<reference key="1">
    <citation type="journal article" date="2008" name="Foodborne Pathog. Dis.">
        <title>The complete genome sequence and analysis of the human pathogen Campylobacter lari.</title>
        <authorList>
            <person name="Miller W.G."/>
            <person name="Wang G."/>
            <person name="Binnewies T.T."/>
            <person name="Parker C.T."/>
        </authorList>
    </citation>
    <scope>NUCLEOTIDE SEQUENCE [LARGE SCALE GENOMIC DNA]</scope>
    <source>
        <strain>RM2100 / D67 / ATCC BAA-1060</strain>
    </source>
</reference>